<proteinExistence type="inferred from homology"/>
<sequence>MSEVLQRITDPKEIKDLDEKELEILAEDLREFLIESVSNTGGHFASNLGVIDLTVALFKNFDFSEDRIIWDVGHQSYAYKILTGRKDKFNTLRQYGGLCGFPKRTESEYDFFATGHSSTSLSSAAGMARAQRLLGKDNKVIAVIGDGALTGGMALEALNDIGYRKDNLIIILNDNQMSICKNVGGLATYLNKLRMGVGYNKLKSDIGSTLDTTSFGKRVKNSLSKLKDGIKKIVVPSMYFEDIGLKYFGIVDGHNIRELNEVLSIAKNIKGPVIIHTVTKKGKGYELAEKNPNKYHGVSPFDLGEGVISKFASRNYSSTFGEEMIKLAKNDDKVVAITAAMPDGTGLKEFREEFPDRFFDVGIAEQHAVTLAAGMAAEGLKPFFAVYSTFLQRAYDQVLHDVCIQKLPVTLCLDRAGLVGEDGETHQGIFDISFLSPMPNMTIVAPKCIDEMEVILKWASNFNAPLAIRYPRGGDIDVNLKPLSKIEYGKWEKVQEGDKIAIVATGKMVQHAMIAAQKIKEEKNIDILIINATFIKPIDKELLNSLSKDGFKIVTIEDNIKKGGFGEGVLEYLNEIGHKEKIVTLAFNDKFIEHGKPDILYKINGLDAEGIKNTLIELL</sequence>
<keyword id="KW-0414">Isoprene biosynthesis</keyword>
<keyword id="KW-0460">Magnesium</keyword>
<keyword id="KW-0479">Metal-binding</keyword>
<keyword id="KW-0784">Thiamine biosynthesis</keyword>
<keyword id="KW-0786">Thiamine pyrophosphate</keyword>
<keyword id="KW-0808">Transferase</keyword>
<dbReference type="EC" id="2.2.1.7" evidence="1"/>
<dbReference type="EMBL" id="CP000246">
    <property type="protein sequence ID" value="ABG83092.1"/>
    <property type="molecule type" value="Genomic_DNA"/>
</dbReference>
<dbReference type="RefSeq" id="WP_003458746.1">
    <property type="nucleotide sequence ID" value="NC_008261.1"/>
</dbReference>
<dbReference type="SMR" id="Q0TPD8"/>
<dbReference type="STRING" id="195103.CPF_2073"/>
<dbReference type="PaxDb" id="195103-CPF_2073"/>
<dbReference type="GeneID" id="93001646"/>
<dbReference type="KEGG" id="cpf:CPF_2073"/>
<dbReference type="eggNOG" id="COG1154">
    <property type="taxonomic scope" value="Bacteria"/>
</dbReference>
<dbReference type="HOGENOM" id="CLU_009227_1_4_9"/>
<dbReference type="UniPathway" id="UPA00064">
    <property type="reaction ID" value="UER00091"/>
</dbReference>
<dbReference type="Proteomes" id="UP000001823">
    <property type="component" value="Chromosome"/>
</dbReference>
<dbReference type="GO" id="GO:0005829">
    <property type="term" value="C:cytosol"/>
    <property type="evidence" value="ECO:0007669"/>
    <property type="project" value="TreeGrafter"/>
</dbReference>
<dbReference type="GO" id="GO:0008661">
    <property type="term" value="F:1-deoxy-D-xylulose-5-phosphate synthase activity"/>
    <property type="evidence" value="ECO:0007669"/>
    <property type="project" value="UniProtKB-UniRule"/>
</dbReference>
<dbReference type="GO" id="GO:0000287">
    <property type="term" value="F:magnesium ion binding"/>
    <property type="evidence" value="ECO:0007669"/>
    <property type="project" value="UniProtKB-UniRule"/>
</dbReference>
<dbReference type="GO" id="GO:0030976">
    <property type="term" value="F:thiamine pyrophosphate binding"/>
    <property type="evidence" value="ECO:0007669"/>
    <property type="project" value="UniProtKB-UniRule"/>
</dbReference>
<dbReference type="GO" id="GO:0052865">
    <property type="term" value="P:1-deoxy-D-xylulose 5-phosphate biosynthetic process"/>
    <property type="evidence" value="ECO:0007669"/>
    <property type="project" value="UniProtKB-UniPathway"/>
</dbReference>
<dbReference type="GO" id="GO:0019288">
    <property type="term" value="P:isopentenyl diphosphate biosynthetic process, methylerythritol 4-phosphate pathway"/>
    <property type="evidence" value="ECO:0007669"/>
    <property type="project" value="TreeGrafter"/>
</dbReference>
<dbReference type="GO" id="GO:0016114">
    <property type="term" value="P:terpenoid biosynthetic process"/>
    <property type="evidence" value="ECO:0007669"/>
    <property type="project" value="UniProtKB-UniRule"/>
</dbReference>
<dbReference type="GO" id="GO:0009228">
    <property type="term" value="P:thiamine biosynthetic process"/>
    <property type="evidence" value="ECO:0007669"/>
    <property type="project" value="UniProtKB-UniRule"/>
</dbReference>
<dbReference type="CDD" id="cd02007">
    <property type="entry name" value="TPP_DXS"/>
    <property type="match status" value="1"/>
</dbReference>
<dbReference type="CDD" id="cd07033">
    <property type="entry name" value="TPP_PYR_DXS_TK_like"/>
    <property type="match status" value="1"/>
</dbReference>
<dbReference type="FunFam" id="3.40.50.970:FF:000005">
    <property type="entry name" value="1-deoxy-D-xylulose-5-phosphate synthase"/>
    <property type="match status" value="1"/>
</dbReference>
<dbReference type="Gene3D" id="3.40.50.920">
    <property type="match status" value="1"/>
</dbReference>
<dbReference type="Gene3D" id="3.40.50.970">
    <property type="match status" value="2"/>
</dbReference>
<dbReference type="HAMAP" id="MF_00315">
    <property type="entry name" value="DXP_synth"/>
    <property type="match status" value="1"/>
</dbReference>
<dbReference type="InterPro" id="IPR005477">
    <property type="entry name" value="Dxylulose-5-P_synthase"/>
</dbReference>
<dbReference type="InterPro" id="IPR029061">
    <property type="entry name" value="THDP-binding"/>
</dbReference>
<dbReference type="InterPro" id="IPR009014">
    <property type="entry name" value="Transketo_C/PFOR_II"/>
</dbReference>
<dbReference type="InterPro" id="IPR005475">
    <property type="entry name" value="Transketolase-like_Pyr-bd"/>
</dbReference>
<dbReference type="InterPro" id="IPR020826">
    <property type="entry name" value="Transketolase_BS"/>
</dbReference>
<dbReference type="InterPro" id="IPR033248">
    <property type="entry name" value="Transketolase_C"/>
</dbReference>
<dbReference type="InterPro" id="IPR049557">
    <property type="entry name" value="Transketolase_CS"/>
</dbReference>
<dbReference type="NCBIfam" id="TIGR00204">
    <property type="entry name" value="dxs"/>
    <property type="match status" value="1"/>
</dbReference>
<dbReference type="NCBIfam" id="NF003933">
    <property type="entry name" value="PRK05444.2-2"/>
    <property type="match status" value="1"/>
</dbReference>
<dbReference type="PANTHER" id="PTHR43322">
    <property type="entry name" value="1-D-DEOXYXYLULOSE 5-PHOSPHATE SYNTHASE-RELATED"/>
    <property type="match status" value="1"/>
</dbReference>
<dbReference type="PANTHER" id="PTHR43322:SF5">
    <property type="entry name" value="1-DEOXY-D-XYLULOSE-5-PHOSPHATE SYNTHASE, CHLOROPLASTIC"/>
    <property type="match status" value="1"/>
</dbReference>
<dbReference type="Pfam" id="PF13292">
    <property type="entry name" value="DXP_synthase_N"/>
    <property type="match status" value="1"/>
</dbReference>
<dbReference type="Pfam" id="PF02779">
    <property type="entry name" value="Transket_pyr"/>
    <property type="match status" value="1"/>
</dbReference>
<dbReference type="Pfam" id="PF02780">
    <property type="entry name" value="Transketolase_C"/>
    <property type="match status" value="1"/>
</dbReference>
<dbReference type="SMART" id="SM00861">
    <property type="entry name" value="Transket_pyr"/>
    <property type="match status" value="1"/>
</dbReference>
<dbReference type="SUPFAM" id="SSF52518">
    <property type="entry name" value="Thiamin diphosphate-binding fold (THDP-binding)"/>
    <property type="match status" value="2"/>
</dbReference>
<dbReference type="SUPFAM" id="SSF52922">
    <property type="entry name" value="TK C-terminal domain-like"/>
    <property type="match status" value="1"/>
</dbReference>
<dbReference type="PROSITE" id="PS00801">
    <property type="entry name" value="TRANSKETOLASE_1"/>
    <property type="match status" value="1"/>
</dbReference>
<dbReference type="PROSITE" id="PS00802">
    <property type="entry name" value="TRANSKETOLASE_2"/>
    <property type="match status" value="1"/>
</dbReference>
<comment type="function">
    <text evidence="1">Catalyzes the acyloin condensation reaction between C atoms 2 and 3 of pyruvate and glyceraldehyde 3-phosphate to yield 1-deoxy-D-xylulose-5-phosphate (DXP).</text>
</comment>
<comment type="catalytic activity">
    <reaction evidence="1">
        <text>D-glyceraldehyde 3-phosphate + pyruvate + H(+) = 1-deoxy-D-xylulose 5-phosphate + CO2</text>
        <dbReference type="Rhea" id="RHEA:12605"/>
        <dbReference type="ChEBI" id="CHEBI:15361"/>
        <dbReference type="ChEBI" id="CHEBI:15378"/>
        <dbReference type="ChEBI" id="CHEBI:16526"/>
        <dbReference type="ChEBI" id="CHEBI:57792"/>
        <dbReference type="ChEBI" id="CHEBI:59776"/>
        <dbReference type="EC" id="2.2.1.7"/>
    </reaction>
</comment>
<comment type="cofactor">
    <cofactor evidence="1">
        <name>Mg(2+)</name>
        <dbReference type="ChEBI" id="CHEBI:18420"/>
    </cofactor>
    <text evidence="1">Binds 1 Mg(2+) ion per subunit.</text>
</comment>
<comment type="cofactor">
    <cofactor evidence="1">
        <name>thiamine diphosphate</name>
        <dbReference type="ChEBI" id="CHEBI:58937"/>
    </cofactor>
    <text evidence="1">Binds 1 thiamine pyrophosphate per subunit.</text>
</comment>
<comment type="pathway">
    <text evidence="1">Metabolic intermediate biosynthesis; 1-deoxy-D-xylulose 5-phosphate biosynthesis; 1-deoxy-D-xylulose 5-phosphate from D-glyceraldehyde 3-phosphate and pyruvate: step 1/1.</text>
</comment>
<comment type="subunit">
    <text evidence="1">Homodimer.</text>
</comment>
<comment type="similarity">
    <text evidence="1">Belongs to the transketolase family. DXPS subfamily.</text>
</comment>
<gene>
    <name evidence="1" type="primary">dxs</name>
    <name type="ordered locus">CPF_2073</name>
</gene>
<reference key="1">
    <citation type="journal article" date="2006" name="Genome Res.">
        <title>Skewed genomic variability in strains of the toxigenic bacterial pathogen, Clostridium perfringens.</title>
        <authorList>
            <person name="Myers G.S.A."/>
            <person name="Rasko D.A."/>
            <person name="Cheung J.K."/>
            <person name="Ravel J."/>
            <person name="Seshadri R."/>
            <person name="DeBoy R.T."/>
            <person name="Ren Q."/>
            <person name="Varga J."/>
            <person name="Awad M.M."/>
            <person name="Brinkac L.M."/>
            <person name="Daugherty S.C."/>
            <person name="Haft D.H."/>
            <person name="Dodson R.J."/>
            <person name="Madupu R."/>
            <person name="Nelson W.C."/>
            <person name="Rosovitz M.J."/>
            <person name="Sullivan S.A."/>
            <person name="Khouri H."/>
            <person name="Dimitrov G.I."/>
            <person name="Watkins K.L."/>
            <person name="Mulligan S."/>
            <person name="Benton J."/>
            <person name="Radune D."/>
            <person name="Fisher D.J."/>
            <person name="Atkins H.S."/>
            <person name="Hiscox T."/>
            <person name="Jost B.H."/>
            <person name="Billington S.J."/>
            <person name="Songer J.G."/>
            <person name="McClane B.A."/>
            <person name="Titball R.W."/>
            <person name="Rood J.I."/>
            <person name="Melville S.B."/>
            <person name="Paulsen I.T."/>
        </authorList>
    </citation>
    <scope>NUCLEOTIDE SEQUENCE [LARGE SCALE GENOMIC DNA]</scope>
    <source>
        <strain>ATCC 13124 / DSM 756 / JCM 1290 / NCIMB 6125 / NCTC 8237 / S 107 / Type A</strain>
    </source>
</reference>
<evidence type="ECO:0000255" key="1">
    <source>
        <dbReference type="HAMAP-Rule" id="MF_00315"/>
    </source>
</evidence>
<accession>Q0TPD8</accession>
<name>DXS_CLOP1</name>
<organism>
    <name type="scientific">Clostridium perfringens (strain ATCC 13124 / DSM 756 / JCM 1290 / NCIMB 6125 / NCTC 8237 / Type A)</name>
    <dbReference type="NCBI Taxonomy" id="195103"/>
    <lineage>
        <taxon>Bacteria</taxon>
        <taxon>Bacillati</taxon>
        <taxon>Bacillota</taxon>
        <taxon>Clostridia</taxon>
        <taxon>Eubacteriales</taxon>
        <taxon>Clostridiaceae</taxon>
        <taxon>Clostridium</taxon>
    </lineage>
</organism>
<feature type="chain" id="PRO_0000256401" description="1-deoxy-D-xylulose-5-phosphate synthase">
    <location>
        <begin position="1"/>
        <end position="619"/>
    </location>
</feature>
<feature type="binding site" evidence="1">
    <location>
        <position position="74"/>
    </location>
    <ligand>
        <name>thiamine diphosphate</name>
        <dbReference type="ChEBI" id="CHEBI:58937"/>
    </ligand>
</feature>
<feature type="binding site" evidence="1">
    <location>
        <begin position="115"/>
        <end position="117"/>
    </location>
    <ligand>
        <name>thiamine diphosphate</name>
        <dbReference type="ChEBI" id="CHEBI:58937"/>
    </ligand>
</feature>
<feature type="binding site" evidence="1">
    <location>
        <position position="146"/>
    </location>
    <ligand>
        <name>Mg(2+)</name>
        <dbReference type="ChEBI" id="CHEBI:18420"/>
    </ligand>
</feature>
<feature type="binding site" evidence="1">
    <location>
        <begin position="147"/>
        <end position="148"/>
    </location>
    <ligand>
        <name>thiamine diphosphate</name>
        <dbReference type="ChEBI" id="CHEBI:58937"/>
    </ligand>
</feature>
<feature type="binding site" evidence="1">
    <location>
        <position position="175"/>
    </location>
    <ligand>
        <name>Mg(2+)</name>
        <dbReference type="ChEBI" id="CHEBI:18420"/>
    </ligand>
</feature>
<feature type="binding site" evidence="1">
    <location>
        <position position="175"/>
    </location>
    <ligand>
        <name>thiamine diphosphate</name>
        <dbReference type="ChEBI" id="CHEBI:58937"/>
    </ligand>
</feature>
<feature type="binding site" evidence="1">
    <location>
        <position position="285"/>
    </location>
    <ligand>
        <name>thiamine diphosphate</name>
        <dbReference type="ChEBI" id="CHEBI:58937"/>
    </ligand>
</feature>
<feature type="binding site" evidence="1">
    <location>
        <position position="365"/>
    </location>
    <ligand>
        <name>thiamine diphosphate</name>
        <dbReference type="ChEBI" id="CHEBI:58937"/>
    </ligand>
</feature>
<protein>
    <recommendedName>
        <fullName evidence="1">1-deoxy-D-xylulose-5-phosphate synthase</fullName>
        <ecNumber evidence="1">2.2.1.7</ecNumber>
    </recommendedName>
    <alternativeName>
        <fullName evidence="1">1-deoxyxylulose-5-phosphate synthase</fullName>
        <shortName evidence="1">DXP synthase</shortName>
        <shortName evidence="1">DXPS</shortName>
    </alternativeName>
</protein>